<keyword id="KW-0414">Isoprene biosynthesis</keyword>
<keyword id="KW-0464">Manganese</keyword>
<keyword id="KW-0479">Metal-binding</keyword>
<keyword id="KW-0521">NADP</keyword>
<keyword id="KW-0560">Oxidoreductase</keyword>
<keyword id="KW-1185">Reference proteome</keyword>
<reference key="1">
    <citation type="journal article" date="2004" name="Science">
        <title>Illuminating the evolutionary history of chlamydiae.</title>
        <authorList>
            <person name="Horn M."/>
            <person name="Collingro A."/>
            <person name="Schmitz-Esser S."/>
            <person name="Beier C.L."/>
            <person name="Purkhold U."/>
            <person name="Fartmann B."/>
            <person name="Brandt P."/>
            <person name="Nyakatura G.J."/>
            <person name="Droege M."/>
            <person name="Frishman D."/>
            <person name="Rattei T."/>
            <person name="Mewes H.-W."/>
            <person name="Wagner M."/>
        </authorList>
    </citation>
    <scope>NUCLEOTIDE SEQUENCE [LARGE SCALE GENOMIC DNA]</scope>
    <source>
        <strain>UWE25</strain>
    </source>
</reference>
<name>DXR_PARUW</name>
<organism>
    <name type="scientific">Protochlamydia amoebophila (strain UWE25)</name>
    <dbReference type="NCBI Taxonomy" id="264201"/>
    <lineage>
        <taxon>Bacteria</taxon>
        <taxon>Pseudomonadati</taxon>
        <taxon>Chlamydiota</taxon>
        <taxon>Chlamydiia</taxon>
        <taxon>Parachlamydiales</taxon>
        <taxon>Parachlamydiaceae</taxon>
        <taxon>Candidatus Protochlamydia</taxon>
    </lineage>
</organism>
<dbReference type="EC" id="1.1.1.267" evidence="1"/>
<dbReference type="EMBL" id="BX908798">
    <property type="protein sequence ID" value="CAF22984.1"/>
    <property type="molecule type" value="Genomic_DNA"/>
</dbReference>
<dbReference type="RefSeq" id="WP_011174810.1">
    <property type="nucleotide sequence ID" value="NC_005861.2"/>
</dbReference>
<dbReference type="SMR" id="Q6MEL5"/>
<dbReference type="STRING" id="264201.pc0260"/>
<dbReference type="KEGG" id="pcu:PC_RS01265"/>
<dbReference type="eggNOG" id="COG0743">
    <property type="taxonomic scope" value="Bacteria"/>
</dbReference>
<dbReference type="HOGENOM" id="CLU_035714_0_1_0"/>
<dbReference type="OrthoDB" id="9806546at2"/>
<dbReference type="UniPathway" id="UPA00056">
    <property type="reaction ID" value="UER00092"/>
</dbReference>
<dbReference type="Proteomes" id="UP000000529">
    <property type="component" value="Chromosome"/>
</dbReference>
<dbReference type="GO" id="GO:0030604">
    <property type="term" value="F:1-deoxy-D-xylulose-5-phosphate reductoisomerase activity"/>
    <property type="evidence" value="ECO:0007669"/>
    <property type="project" value="UniProtKB-UniRule"/>
</dbReference>
<dbReference type="GO" id="GO:0030145">
    <property type="term" value="F:manganese ion binding"/>
    <property type="evidence" value="ECO:0007669"/>
    <property type="project" value="TreeGrafter"/>
</dbReference>
<dbReference type="GO" id="GO:0070402">
    <property type="term" value="F:NADPH binding"/>
    <property type="evidence" value="ECO:0007669"/>
    <property type="project" value="InterPro"/>
</dbReference>
<dbReference type="GO" id="GO:0051484">
    <property type="term" value="P:isopentenyl diphosphate biosynthetic process, methylerythritol 4-phosphate pathway involved in terpenoid biosynthetic process"/>
    <property type="evidence" value="ECO:0007669"/>
    <property type="project" value="TreeGrafter"/>
</dbReference>
<dbReference type="FunFam" id="3.40.50.720:FF:000045">
    <property type="entry name" value="1-deoxy-D-xylulose 5-phosphate reductoisomerase"/>
    <property type="match status" value="1"/>
</dbReference>
<dbReference type="Gene3D" id="1.10.1740.10">
    <property type="match status" value="1"/>
</dbReference>
<dbReference type="Gene3D" id="3.40.50.720">
    <property type="entry name" value="NAD(P)-binding Rossmann-like Domain"/>
    <property type="match status" value="1"/>
</dbReference>
<dbReference type="HAMAP" id="MF_00183">
    <property type="entry name" value="DXP_reductoisom"/>
    <property type="match status" value="1"/>
</dbReference>
<dbReference type="InterPro" id="IPR003821">
    <property type="entry name" value="DXP_reductoisomerase"/>
</dbReference>
<dbReference type="InterPro" id="IPR013644">
    <property type="entry name" value="DXP_reductoisomerase_C"/>
</dbReference>
<dbReference type="InterPro" id="IPR013512">
    <property type="entry name" value="DXP_reductoisomerase_N"/>
</dbReference>
<dbReference type="InterPro" id="IPR026877">
    <property type="entry name" value="DXPR_C"/>
</dbReference>
<dbReference type="InterPro" id="IPR036169">
    <property type="entry name" value="DXPR_C_sf"/>
</dbReference>
<dbReference type="InterPro" id="IPR036291">
    <property type="entry name" value="NAD(P)-bd_dom_sf"/>
</dbReference>
<dbReference type="NCBIfam" id="TIGR00243">
    <property type="entry name" value="Dxr"/>
    <property type="match status" value="1"/>
</dbReference>
<dbReference type="NCBIfam" id="NF009114">
    <property type="entry name" value="PRK12464.1"/>
    <property type="match status" value="1"/>
</dbReference>
<dbReference type="PANTHER" id="PTHR30525">
    <property type="entry name" value="1-DEOXY-D-XYLULOSE 5-PHOSPHATE REDUCTOISOMERASE"/>
    <property type="match status" value="1"/>
</dbReference>
<dbReference type="PANTHER" id="PTHR30525:SF0">
    <property type="entry name" value="1-DEOXY-D-XYLULOSE 5-PHOSPHATE REDUCTOISOMERASE, CHLOROPLASTIC"/>
    <property type="match status" value="1"/>
</dbReference>
<dbReference type="Pfam" id="PF08436">
    <property type="entry name" value="DXP_redisom_C"/>
    <property type="match status" value="1"/>
</dbReference>
<dbReference type="Pfam" id="PF02670">
    <property type="entry name" value="DXP_reductoisom"/>
    <property type="match status" value="1"/>
</dbReference>
<dbReference type="Pfam" id="PF13288">
    <property type="entry name" value="DXPR_C"/>
    <property type="match status" value="1"/>
</dbReference>
<dbReference type="PIRSF" id="PIRSF006205">
    <property type="entry name" value="Dxp_reductismrs"/>
    <property type="match status" value="1"/>
</dbReference>
<dbReference type="SUPFAM" id="SSF69055">
    <property type="entry name" value="1-deoxy-D-xylulose-5-phosphate reductoisomerase, C-terminal domain"/>
    <property type="match status" value="1"/>
</dbReference>
<dbReference type="SUPFAM" id="SSF55347">
    <property type="entry name" value="Glyceraldehyde-3-phosphate dehydrogenase-like, C-terminal domain"/>
    <property type="match status" value="1"/>
</dbReference>
<dbReference type="SUPFAM" id="SSF51735">
    <property type="entry name" value="NAD(P)-binding Rossmann-fold domains"/>
    <property type="match status" value="1"/>
</dbReference>
<feature type="chain" id="PRO_0000163686" description="1-deoxy-D-xylulose 5-phosphate reductoisomerase">
    <location>
        <begin position="1"/>
        <end position="384"/>
    </location>
</feature>
<feature type="binding site" evidence="1">
    <location>
        <position position="10"/>
    </location>
    <ligand>
        <name>NADPH</name>
        <dbReference type="ChEBI" id="CHEBI:57783"/>
    </ligand>
</feature>
<feature type="binding site" evidence="1">
    <location>
        <position position="11"/>
    </location>
    <ligand>
        <name>NADPH</name>
        <dbReference type="ChEBI" id="CHEBI:57783"/>
    </ligand>
</feature>
<feature type="binding site" evidence="1">
    <location>
        <position position="12"/>
    </location>
    <ligand>
        <name>NADPH</name>
        <dbReference type="ChEBI" id="CHEBI:57783"/>
    </ligand>
</feature>
<feature type="binding site" evidence="1">
    <location>
        <position position="13"/>
    </location>
    <ligand>
        <name>NADPH</name>
        <dbReference type="ChEBI" id="CHEBI:57783"/>
    </ligand>
</feature>
<feature type="binding site" evidence="1">
    <location>
        <position position="38"/>
    </location>
    <ligand>
        <name>NADPH</name>
        <dbReference type="ChEBI" id="CHEBI:57783"/>
    </ligand>
</feature>
<feature type="binding site" evidence="1">
    <location>
        <position position="120"/>
    </location>
    <ligand>
        <name>NADPH</name>
        <dbReference type="ChEBI" id="CHEBI:57783"/>
    </ligand>
</feature>
<feature type="binding site" evidence="1">
    <location>
        <position position="121"/>
    </location>
    <ligand>
        <name>1-deoxy-D-xylulose 5-phosphate</name>
        <dbReference type="ChEBI" id="CHEBI:57792"/>
    </ligand>
</feature>
<feature type="binding site" evidence="1">
    <location>
        <position position="122"/>
    </location>
    <ligand>
        <name>NADPH</name>
        <dbReference type="ChEBI" id="CHEBI:57783"/>
    </ligand>
</feature>
<feature type="binding site" evidence="1">
    <location>
        <position position="146"/>
    </location>
    <ligand>
        <name>Mn(2+)</name>
        <dbReference type="ChEBI" id="CHEBI:29035"/>
    </ligand>
</feature>
<feature type="binding site" evidence="1">
    <location>
        <position position="147"/>
    </location>
    <ligand>
        <name>1-deoxy-D-xylulose 5-phosphate</name>
        <dbReference type="ChEBI" id="CHEBI:57792"/>
    </ligand>
</feature>
<feature type="binding site" evidence="1">
    <location>
        <position position="148"/>
    </location>
    <ligand>
        <name>1-deoxy-D-xylulose 5-phosphate</name>
        <dbReference type="ChEBI" id="CHEBI:57792"/>
    </ligand>
</feature>
<feature type="binding site" evidence="1">
    <location>
        <position position="148"/>
    </location>
    <ligand>
        <name>Mn(2+)</name>
        <dbReference type="ChEBI" id="CHEBI:29035"/>
    </ligand>
</feature>
<feature type="binding site" evidence="1">
    <location>
        <position position="172"/>
    </location>
    <ligand>
        <name>1-deoxy-D-xylulose 5-phosphate</name>
        <dbReference type="ChEBI" id="CHEBI:57792"/>
    </ligand>
</feature>
<feature type="binding site" evidence="1">
    <location>
        <position position="195"/>
    </location>
    <ligand>
        <name>1-deoxy-D-xylulose 5-phosphate</name>
        <dbReference type="ChEBI" id="CHEBI:57792"/>
    </ligand>
</feature>
<feature type="binding site" evidence="1">
    <location>
        <position position="201"/>
    </location>
    <ligand>
        <name>NADPH</name>
        <dbReference type="ChEBI" id="CHEBI:57783"/>
    </ligand>
</feature>
<feature type="binding site" evidence="1">
    <location>
        <position position="208"/>
    </location>
    <ligand>
        <name>1-deoxy-D-xylulose 5-phosphate</name>
        <dbReference type="ChEBI" id="CHEBI:57792"/>
    </ligand>
</feature>
<feature type="binding site" evidence="1">
    <location>
        <position position="213"/>
    </location>
    <ligand>
        <name>1-deoxy-D-xylulose 5-phosphate</name>
        <dbReference type="ChEBI" id="CHEBI:57792"/>
    </ligand>
</feature>
<feature type="binding site" evidence="1">
    <location>
        <position position="214"/>
    </location>
    <ligand>
        <name>1-deoxy-D-xylulose 5-phosphate</name>
        <dbReference type="ChEBI" id="CHEBI:57792"/>
    </ligand>
</feature>
<feature type="binding site" evidence="1">
    <location>
        <position position="217"/>
    </location>
    <ligand>
        <name>1-deoxy-D-xylulose 5-phosphate</name>
        <dbReference type="ChEBI" id="CHEBI:57792"/>
    </ligand>
</feature>
<feature type="binding site" evidence="1">
    <location>
        <position position="217"/>
    </location>
    <ligand>
        <name>Mn(2+)</name>
        <dbReference type="ChEBI" id="CHEBI:29035"/>
    </ligand>
</feature>
<protein>
    <recommendedName>
        <fullName evidence="1">1-deoxy-D-xylulose 5-phosphate reductoisomerase</fullName>
        <shortName evidence="1">DXP reductoisomerase</shortName>
        <ecNumber evidence="1">1.1.1.267</ecNumber>
    </recommendedName>
    <alternativeName>
        <fullName evidence="1">1-deoxyxylulose-5-phosphate reductoisomerase</fullName>
    </alternativeName>
    <alternativeName>
        <fullName evidence="1">2-C-methyl-D-erythritol 4-phosphate synthase</fullName>
    </alternativeName>
</protein>
<comment type="function">
    <text evidence="1">Catalyzes the NADPH-dependent rearrangement and reduction of 1-deoxy-D-xylulose-5-phosphate (DXP) to 2-C-methyl-D-erythritol 4-phosphate (MEP).</text>
</comment>
<comment type="catalytic activity">
    <reaction evidence="1">
        <text>2-C-methyl-D-erythritol 4-phosphate + NADP(+) = 1-deoxy-D-xylulose 5-phosphate + NADPH + H(+)</text>
        <dbReference type="Rhea" id="RHEA:13717"/>
        <dbReference type="ChEBI" id="CHEBI:15378"/>
        <dbReference type="ChEBI" id="CHEBI:57783"/>
        <dbReference type="ChEBI" id="CHEBI:57792"/>
        <dbReference type="ChEBI" id="CHEBI:58262"/>
        <dbReference type="ChEBI" id="CHEBI:58349"/>
        <dbReference type="EC" id="1.1.1.267"/>
    </reaction>
    <physiologicalReaction direction="right-to-left" evidence="1">
        <dbReference type="Rhea" id="RHEA:13719"/>
    </physiologicalReaction>
</comment>
<comment type="cofactor">
    <cofactor evidence="1">
        <name>Mg(2+)</name>
        <dbReference type="ChEBI" id="CHEBI:18420"/>
    </cofactor>
    <cofactor evidence="1">
        <name>Mn(2+)</name>
        <dbReference type="ChEBI" id="CHEBI:29035"/>
    </cofactor>
</comment>
<comment type="pathway">
    <text evidence="1">Isoprenoid biosynthesis; isopentenyl diphosphate biosynthesis via DXP pathway; isopentenyl diphosphate from 1-deoxy-D-xylulose 5-phosphate: step 1/6.</text>
</comment>
<comment type="similarity">
    <text evidence="1">Belongs to the DXR family.</text>
</comment>
<accession>Q6MEL5</accession>
<sequence length="384" mass="42135">MKHIAILGSTGSIGKNTLQVARHLKERIKVVAIAARENIDLLEAQSKEFCPDIIAVFNNAKAYELQKRLPGKTVLAGMEGLLAAASYSEADLVISAMTGTMGLQPTIEAIKAGKDVGLANKEALVSGGAIIMKLVKEKNINLLPIDSEHSAIFQCLNGEALKSVQRIILTSSGGPFRTWTQEQLETVTVEQALNHPTWSMGPKVTIDSSTLMNKGLEVIEAFWLFDVSPEQIDVIVHPQSIIHSLVEFCDGSMLAQMSEPNMIVPIQYSLTYPDRAPGLFKPFDFMKNSKLEFFEPNKKTFRCLALAYEALKCGGTLPCYMNAANEVLVERFLKGELSWKNIGIQLEKLMDQHASISVDSLETILAVDALAREEAARSKLISTK</sequence>
<evidence type="ECO:0000255" key="1">
    <source>
        <dbReference type="HAMAP-Rule" id="MF_00183"/>
    </source>
</evidence>
<gene>
    <name evidence="1" type="primary">dxr</name>
    <name type="ordered locus">pc0260</name>
</gene>
<proteinExistence type="inferred from homology"/>